<keyword id="KW-0002">3D-structure</keyword>
<keyword id="KW-0007">Acetylation</keyword>
<keyword id="KW-0025">Alternative splicing</keyword>
<keyword id="KW-0130">Cell adhesion</keyword>
<keyword id="KW-0965">Cell junction</keyword>
<keyword id="KW-0160">Chromosomal rearrangement</keyword>
<keyword id="KW-0175">Coiled coil</keyword>
<keyword id="KW-0597">Phosphoprotein</keyword>
<keyword id="KW-1267">Proteomics identification</keyword>
<keyword id="KW-0656">Proto-oncogene</keyword>
<keyword id="KW-1185">Reference proteome</keyword>
<keyword id="KW-0677">Repeat</keyword>
<protein>
    <recommendedName>
        <fullName>Afadin</fullName>
    </recommendedName>
    <alternativeName>
        <fullName>ALL1-fused gene from chromosome 6 protein</fullName>
        <shortName>Protein AF-6</shortName>
    </alternativeName>
    <alternativeName>
        <fullName evidence="16">Afadin adherens junction formation factor</fullName>
    </alternativeName>
</protein>
<name>AFAD_HUMAN</name>
<comment type="function">
    <text evidence="2 3 9 11">Belongs to an adhesion system, probably together with the E-cadherin-catenin system, which plays a role in the organization of homotypic, interneuronal and heterotypic cell-cell adherens junctions (AJs) (By similarity). Nectin- and actin-filament-binding protein that connects nectin to the actin cytoskeleton (PubMed:11024295). May play a key role in the organization of epithelial structures of the embryonic ectoderm (By similarity). Essential for the organization of adherens junctions (PubMed:30463011).</text>
</comment>
<comment type="subunit">
    <text evidence="1 9 10 11">Homodimer. Interacts with F-actin, nectin and NECTIN3. Essential for the association of nectin and E-cadherin. Isoform 1/s-afadin does not interact with F-actin. Interacts with ZO-1 and occludin, but probably in an indirect manner. Interacts with RIT1 and RIT2 (By similarity). Interacts with NRXN1 and BCR. Interacts with ADAM10; the interaction locks ADAM10 at adherens junctions following ADAM10 recruitment to adherens junctions by TSPAN33 (PubMed:30463011).</text>
</comment>
<comment type="interaction">
    <interactant intactId="EBI-365875">
        <id>P55196</id>
    </interactant>
    <interactant intactId="EBI-351394">
        <id>Q16643</id>
        <label>DBN1</label>
    </interactant>
    <organismsDiffer>false</organismsDiffer>
    <experiments>4</experiments>
</comment>
<comment type="interaction">
    <interactant intactId="EBI-365875">
        <id>P55196</id>
    </interactant>
    <interactant intactId="EBI-718419">
        <id>Q92692</id>
        <label>NECTIN2</label>
    </interactant>
    <organismsDiffer>false</organismsDiffer>
    <experiments>2</experiments>
</comment>
<comment type="interaction">
    <interactant intactId="EBI-365875">
        <id>P55196</id>
    </interactant>
    <interactant intactId="EBI-621482">
        <id>P12931</id>
        <label>SRC</label>
    </interactant>
    <organismsDiffer>false</organismsDiffer>
    <experiments>7</experiments>
</comment>
<comment type="subcellular location">
    <subcellularLocation>
        <location evidence="11">Cell junction</location>
        <location evidence="11">Adherens junction</location>
    </subcellularLocation>
    <text evidence="2">Not found at cell-matrix AJs.</text>
</comment>
<comment type="alternative products">
    <event type="alternative splicing"/>
    <isoform>
        <id>P55196-4</id>
        <name>4</name>
        <sequence type="displayed"/>
    </isoform>
    <isoform>
        <id>P55196-2</id>
        <name>1</name>
        <name>s-afadin</name>
        <sequence type="described" ref="VSP_038707 VSP_038708 VSP_000217 VSP_000218"/>
    </isoform>
    <isoform>
        <id>P55196-1</id>
        <name>2</name>
        <name>l-afadin</name>
        <sequence type="described" ref="VSP_038707 VSP_038708 VSP_038709 VSP_038711"/>
    </isoform>
    <isoform>
        <id>P55196-3</id>
        <name>3</name>
        <sequence type="described" ref="VSP_038707 VSP_038708 VSP_038709 VSP_038710"/>
    </isoform>
    <isoform>
        <id>P55196-6</id>
        <name>6</name>
        <sequence type="described" ref="VSP_041197 VSP_041198 VSP_041199"/>
    </isoform>
    <isoform>
        <id>P55196-5</id>
        <name>5</name>
        <sequence type="described" ref="VSP_038707 VSP_019257"/>
    </isoform>
</comment>
<comment type="domain">
    <text>The PDZ/DHR domain interacts with the C-terminus of nectin and the Pro-rich C-terminal domain interacts with F-actin.</text>
</comment>
<comment type="disease">
    <text>A chromosomal aberration involving AFDN is associated with acute leukemias. Translocation t(6;11)(q27;q23) with KMT2A/MLL1. The result is a rogue activator protein.</text>
</comment>
<comment type="miscellaneous">
    <molecule>Isoform 1</molecule>
    <text evidence="15">May be due to intron retention.</text>
</comment>
<comment type="miscellaneous">
    <molecule>Isoform 2</molecule>
    <text evidence="15">May be due to intron retention.</text>
</comment>
<comment type="sequence caution" evidence="15">
    <conflict type="frameshift">
        <sequence resource="EMBL-CDS" id="CAB82312"/>
    </conflict>
</comment>
<comment type="online information" name="Atlas of Genetics and Cytogenetics in Oncology and Haematology">
    <link uri="https://atlasgeneticsoncology.org/gene/6/AF6"/>
</comment>
<accession>P55196</accession>
<accession>O75087</accession>
<accession>O75088</accession>
<accession>O75089</accession>
<accession>Q59FP0</accession>
<accession>Q5TIG6</accession>
<accession>Q5TIG7</accession>
<accession>Q9NSN7</accession>
<accession>Q9NU92</accession>
<evidence type="ECO:0000250" key="1"/>
<evidence type="ECO:0000250" key="2">
    <source>
        <dbReference type="UniProtKB" id="O35889"/>
    </source>
</evidence>
<evidence type="ECO:0000250" key="3">
    <source>
        <dbReference type="UniProtKB" id="Q9QZQ1"/>
    </source>
</evidence>
<evidence type="ECO:0000255" key="4"/>
<evidence type="ECO:0000255" key="5">
    <source>
        <dbReference type="PROSITE-ProRule" id="PRU00143"/>
    </source>
</evidence>
<evidence type="ECO:0000255" key="6">
    <source>
        <dbReference type="PROSITE-ProRule" id="PRU00166"/>
    </source>
</evidence>
<evidence type="ECO:0000255" key="7">
    <source>
        <dbReference type="PROSITE-ProRule" id="PRU00503"/>
    </source>
</evidence>
<evidence type="ECO:0000256" key="8">
    <source>
        <dbReference type="SAM" id="MobiDB-lite"/>
    </source>
</evidence>
<evidence type="ECO:0000269" key="9">
    <source>
    </source>
</evidence>
<evidence type="ECO:0000269" key="10">
    <source>
    </source>
</evidence>
<evidence type="ECO:0000269" key="11">
    <source>
    </source>
</evidence>
<evidence type="ECO:0000303" key="12">
    <source>
    </source>
</evidence>
<evidence type="ECO:0000303" key="13">
    <source>
    </source>
</evidence>
<evidence type="ECO:0000303" key="14">
    <source ref="5"/>
</evidence>
<evidence type="ECO:0000305" key="15"/>
<evidence type="ECO:0000312" key="16">
    <source>
        <dbReference type="HGNC" id="HGNC:7137"/>
    </source>
</evidence>
<evidence type="ECO:0007744" key="17">
    <source>
    </source>
</evidence>
<evidence type="ECO:0007744" key="18">
    <source>
    </source>
</evidence>
<evidence type="ECO:0007744" key="19">
    <source>
    </source>
</evidence>
<evidence type="ECO:0007744" key="20">
    <source>
    </source>
</evidence>
<evidence type="ECO:0007744" key="21">
    <source>
    </source>
</evidence>
<evidence type="ECO:0007744" key="22">
    <source>
    </source>
</evidence>
<evidence type="ECO:0007744" key="23">
    <source>
    </source>
</evidence>
<evidence type="ECO:0007829" key="24">
    <source>
        <dbReference type="PDB" id="1T2M"/>
    </source>
</evidence>
<evidence type="ECO:0007829" key="25">
    <source>
        <dbReference type="PDB" id="1XZ9"/>
    </source>
</evidence>
<evidence type="ECO:0007829" key="26">
    <source>
        <dbReference type="PDB" id="5A6C"/>
    </source>
</evidence>
<evidence type="ECO:0007829" key="27">
    <source>
        <dbReference type="PDB" id="7QCR"/>
    </source>
</evidence>
<proteinExistence type="evidence at protein level"/>
<reference key="1">
    <citation type="journal article" date="1993" name="Cancer Res.">
        <title>Cloning of the ALL-1 fusion partner, the AF-6 gene, involved in acute myeloid leukemias with the t(6;11) chromosome translocation.</title>
        <authorList>
            <person name="Prasad R."/>
            <person name="Gu Y."/>
            <person name="Alder H."/>
            <person name="Nakamura T."/>
            <person name="Canaani O."/>
            <person name="Saito H."/>
            <person name="Huebner K."/>
            <person name="Gale R.P."/>
            <person name="Nowell P.C."/>
            <person name="Kuriyama K."/>
            <person name="Miyazaki Y."/>
            <person name="Croce C.M."/>
            <person name="Canaani E."/>
        </authorList>
    </citation>
    <scope>NUCLEOTIDE SEQUENCE [MRNA] (ISOFORM 1)</scope>
    <scope>CHROMOSOMAL TRANSLOCATION WITH KMT2A</scope>
</reference>
<reference key="2">
    <citation type="journal article" date="1998" name="DNA Res.">
        <title>Complete genomic structure, DNA polymorphisms, and alternative splicing of the human AF-6 gene.</title>
        <authorList>
            <person name="Saito S."/>
            <person name="Matsushima M."/>
            <person name="Shirahama S."/>
            <person name="Minaguchi T."/>
            <person name="Kanamori Y."/>
            <person name="Minami M."/>
            <person name="Nakamura Y."/>
        </authorList>
    </citation>
    <scope>NUCLEOTIDE SEQUENCE [GENOMIC DNA]</scope>
    <scope>ALTERNATIVE SPLICING (ISOFORMS 1; 2 AND 3)</scope>
    <source>
        <tissue>Fetal brain</tissue>
    </source>
</reference>
<reference key="3">
    <citation type="journal article" date="2003" name="Nature">
        <title>The DNA sequence and analysis of human chromosome 6.</title>
        <authorList>
            <person name="Mungall A.J."/>
            <person name="Palmer S.A."/>
            <person name="Sims S.K."/>
            <person name="Edwards C.A."/>
            <person name="Ashurst J.L."/>
            <person name="Wilming L."/>
            <person name="Jones M.C."/>
            <person name="Horton R."/>
            <person name="Hunt S.E."/>
            <person name="Scott C.E."/>
            <person name="Gilbert J.G.R."/>
            <person name="Clamp M.E."/>
            <person name="Bethel G."/>
            <person name="Milne S."/>
            <person name="Ainscough R."/>
            <person name="Almeida J.P."/>
            <person name="Ambrose K.D."/>
            <person name="Andrews T.D."/>
            <person name="Ashwell R.I.S."/>
            <person name="Babbage A.K."/>
            <person name="Bagguley C.L."/>
            <person name="Bailey J."/>
            <person name="Banerjee R."/>
            <person name="Barker D.J."/>
            <person name="Barlow K.F."/>
            <person name="Bates K."/>
            <person name="Beare D.M."/>
            <person name="Beasley H."/>
            <person name="Beasley O."/>
            <person name="Bird C.P."/>
            <person name="Blakey S.E."/>
            <person name="Bray-Allen S."/>
            <person name="Brook J."/>
            <person name="Brown A.J."/>
            <person name="Brown J.Y."/>
            <person name="Burford D.C."/>
            <person name="Burrill W."/>
            <person name="Burton J."/>
            <person name="Carder C."/>
            <person name="Carter N.P."/>
            <person name="Chapman J.C."/>
            <person name="Clark S.Y."/>
            <person name="Clark G."/>
            <person name="Clee C.M."/>
            <person name="Clegg S."/>
            <person name="Cobley V."/>
            <person name="Collier R.E."/>
            <person name="Collins J.E."/>
            <person name="Colman L.K."/>
            <person name="Corby N.R."/>
            <person name="Coville G.J."/>
            <person name="Culley K.M."/>
            <person name="Dhami P."/>
            <person name="Davies J."/>
            <person name="Dunn M."/>
            <person name="Earthrowl M.E."/>
            <person name="Ellington A.E."/>
            <person name="Evans K.A."/>
            <person name="Faulkner L."/>
            <person name="Francis M.D."/>
            <person name="Frankish A."/>
            <person name="Frankland J."/>
            <person name="French L."/>
            <person name="Garner P."/>
            <person name="Garnett J."/>
            <person name="Ghori M.J."/>
            <person name="Gilby L.M."/>
            <person name="Gillson C.J."/>
            <person name="Glithero R.J."/>
            <person name="Grafham D.V."/>
            <person name="Grant M."/>
            <person name="Gribble S."/>
            <person name="Griffiths C."/>
            <person name="Griffiths M.N.D."/>
            <person name="Hall R."/>
            <person name="Halls K.S."/>
            <person name="Hammond S."/>
            <person name="Harley J.L."/>
            <person name="Hart E.A."/>
            <person name="Heath P.D."/>
            <person name="Heathcott R."/>
            <person name="Holmes S.J."/>
            <person name="Howden P.J."/>
            <person name="Howe K.L."/>
            <person name="Howell G.R."/>
            <person name="Huckle E."/>
            <person name="Humphray S.J."/>
            <person name="Humphries M.D."/>
            <person name="Hunt A.R."/>
            <person name="Johnson C.M."/>
            <person name="Joy A.A."/>
            <person name="Kay M."/>
            <person name="Keenan S.J."/>
            <person name="Kimberley A.M."/>
            <person name="King A."/>
            <person name="Laird G.K."/>
            <person name="Langford C."/>
            <person name="Lawlor S."/>
            <person name="Leongamornlert D.A."/>
            <person name="Leversha M."/>
            <person name="Lloyd C.R."/>
            <person name="Lloyd D.M."/>
            <person name="Loveland J.E."/>
            <person name="Lovell J."/>
            <person name="Martin S."/>
            <person name="Mashreghi-Mohammadi M."/>
            <person name="Maslen G.L."/>
            <person name="Matthews L."/>
            <person name="McCann O.T."/>
            <person name="McLaren S.J."/>
            <person name="McLay K."/>
            <person name="McMurray A."/>
            <person name="Moore M.J.F."/>
            <person name="Mullikin J.C."/>
            <person name="Niblett D."/>
            <person name="Nickerson T."/>
            <person name="Novik K.L."/>
            <person name="Oliver K."/>
            <person name="Overton-Larty E.K."/>
            <person name="Parker A."/>
            <person name="Patel R."/>
            <person name="Pearce A.V."/>
            <person name="Peck A.I."/>
            <person name="Phillimore B.J.C.T."/>
            <person name="Phillips S."/>
            <person name="Plumb R.W."/>
            <person name="Porter K.M."/>
            <person name="Ramsey Y."/>
            <person name="Ranby S.A."/>
            <person name="Rice C.M."/>
            <person name="Ross M.T."/>
            <person name="Searle S.M."/>
            <person name="Sehra H.K."/>
            <person name="Sheridan E."/>
            <person name="Skuce C.D."/>
            <person name="Smith S."/>
            <person name="Smith M."/>
            <person name="Spraggon L."/>
            <person name="Squares S.L."/>
            <person name="Steward C.A."/>
            <person name="Sycamore N."/>
            <person name="Tamlyn-Hall G."/>
            <person name="Tester J."/>
            <person name="Theaker A.J."/>
            <person name="Thomas D.W."/>
            <person name="Thorpe A."/>
            <person name="Tracey A."/>
            <person name="Tromans A."/>
            <person name="Tubby B."/>
            <person name="Wall M."/>
            <person name="Wallis J.M."/>
            <person name="West A.P."/>
            <person name="White S.S."/>
            <person name="Whitehead S.L."/>
            <person name="Whittaker H."/>
            <person name="Wild A."/>
            <person name="Willey D.J."/>
            <person name="Wilmer T.E."/>
            <person name="Wood J.M."/>
            <person name="Wray P.W."/>
            <person name="Wyatt J.C."/>
            <person name="Young L."/>
            <person name="Younger R.M."/>
            <person name="Bentley D.R."/>
            <person name="Coulson A."/>
            <person name="Durbin R.M."/>
            <person name="Hubbard T."/>
            <person name="Sulston J.E."/>
            <person name="Dunham I."/>
            <person name="Rogers J."/>
            <person name="Beck S."/>
        </authorList>
    </citation>
    <scope>NUCLEOTIDE SEQUENCE [LARGE SCALE GENOMIC DNA]</scope>
</reference>
<reference key="4">
    <citation type="submission" date="2005-09" db="EMBL/GenBank/DDBJ databases">
        <authorList>
            <person name="Mural R.J."/>
            <person name="Istrail S."/>
            <person name="Sutton G.G."/>
            <person name="Florea L."/>
            <person name="Halpern A.L."/>
            <person name="Mobarry C.M."/>
            <person name="Lippert R."/>
            <person name="Walenz B."/>
            <person name="Shatkay H."/>
            <person name="Dew I."/>
            <person name="Miller J.R."/>
            <person name="Flanigan M.J."/>
            <person name="Edwards N.J."/>
            <person name="Bolanos R."/>
            <person name="Fasulo D."/>
            <person name="Halldorsson B.V."/>
            <person name="Hannenhalli S."/>
            <person name="Turner R."/>
            <person name="Yooseph S."/>
            <person name="Lu F."/>
            <person name="Nusskern D.R."/>
            <person name="Shue B.C."/>
            <person name="Zheng X.H."/>
            <person name="Zhong F."/>
            <person name="Delcher A.L."/>
            <person name="Huson D.H."/>
            <person name="Kravitz S.A."/>
            <person name="Mouchard L."/>
            <person name="Reinert K."/>
            <person name="Remington K.A."/>
            <person name="Clark A.G."/>
            <person name="Waterman M.S."/>
            <person name="Eichler E.E."/>
            <person name="Adams M.D."/>
            <person name="Hunkapiller M.W."/>
            <person name="Myers E.W."/>
            <person name="Venter J.C."/>
        </authorList>
    </citation>
    <scope>NUCLEOTIDE SEQUENCE [LARGE SCALE GENOMIC DNA]</scope>
</reference>
<reference key="5">
    <citation type="submission" date="2005-03" db="EMBL/GenBank/DDBJ databases">
        <title>Homo sapiens protein coding cDNA.</title>
        <authorList>
            <person name="Totoki Y."/>
            <person name="Toyoda A."/>
            <person name="Takeda T."/>
            <person name="Sakaki Y."/>
            <person name="Tanaka A."/>
            <person name="Yokoyama S."/>
            <person name="Ohara O."/>
            <person name="Nagase T."/>
            <person name="Kikuno R.F."/>
        </authorList>
    </citation>
    <scope>NUCLEOTIDE SEQUENCE [LARGE SCALE MRNA] OF 13-1824 (ISOFORM 6)</scope>
    <source>
        <tissue>Brain</tissue>
    </source>
</reference>
<reference key="6">
    <citation type="journal article" date="2007" name="BMC Genomics">
        <title>The full-ORF clone resource of the German cDNA consortium.</title>
        <authorList>
            <person name="Bechtel S."/>
            <person name="Rosenfelder H."/>
            <person name="Duda A."/>
            <person name="Schmidt C.P."/>
            <person name="Ernst U."/>
            <person name="Wellenreuther R."/>
            <person name="Mehrle A."/>
            <person name="Schuster C."/>
            <person name="Bahr A."/>
            <person name="Bloecker H."/>
            <person name="Heubner D."/>
            <person name="Hoerlein A."/>
            <person name="Michel G."/>
            <person name="Wedler H."/>
            <person name="Koehrer K."/>
            <person name="Ottenwaelder B."/>
            <person name="Poustka A."/>
            <person name="Wiemann S."/>
            <person name="Schupp I."/>
        </authorList>
    </citation>
    <scope>NUCLEOTIDE SEQUENCE [LARGE SCALE MRNA] OF 335-1824 (ISOFORM 5)</scope>
    <source>
        <tissue>Amygdala</tissue>
    </source>
</reference>
<reference key="7">
    <citation type="journal article" date="2000" name="Gene">
        <title>Human nectin3/PRR3: a novel member of the PVR/PRR/nectin family that interacts with afadin.</title>
        <authorList>
            <person name="Reymond N."/>
            <person name="Borg J.-P."/>
            <person name="Lecocq E."/>
            <person name="Adelaide J."/>
            <person name="Campadelli-Fiume G."/>
            <person name="Dubreuil P."/>
            <person name="Lopez M."/>
        </authorList>
    </citation>
    <scope>FUNCTION</scope>
    <scope>INTERACTION WITH NECTIN3</scope>
</reference>
<reference key="8">
    <citation type="journal article" date="2003" name="J. Cell Sci.">
        <title>Nectin and afadin: novel organizers of intercellular junctions.</title>
        <authorList>
            <person name="Takai Y."/>
            <person name="Nakanishi H."/>
        </authorList>
    </citation>
    <scope>REVIEW ON INTERACTION</scope>
</reference>
<reference key="9">
    <citation type="journal article" date="2004" name="Anal. Chem.">
        <title>Robust phosphoproteomic profiling of tyrosine phosphorylation sites from human T cells using immobilized metal affinity chromatography and tandem mass spectrometry.</title>
        <authorList>
            <person name="Brill L.M."/>
            <person name="Salomon A.R."/>
            <person name="Ficarro S.B."/>
            <person name="Mukherji M."/>
            <person name="Stettler-Gill M."/>
            <person name="Peters E.C."/>
        </authorList>
    </citation>
    <scope>PHOSPHORYLATION [LARGE SCALE ANALYSIS] AT SER-1182</scope>
    <scope>IDENTIFICATION BY MASS SPECTROMETRY [LARGE SCALE ANALYSIS]</scope>
    <source>
        <tissue>Leukemic T-cell</tissue>
    </source>
</reference>
<reference key="10">
    <citation type="journal article" date="2007" name="Mol. Cell. Proteomics">
        <title>Quantitative phosphoproteome profiling of Wnt3a-mediated signaling network: indicating the involvement of ribonucleoside-diphosphate reductase M2 subunit phosphorylation at residue serine 20 in canonical Wnt signal transduction.</title>
        <authorList>
            <person name="Tang L.-Y."/>
            <person name="Deng N."/>
            <person name="Wang L.-S."/>
            <person name="Dai J."/>
            <person name="Wang Z.-L."/>
            <person name="Jiang X.-S."/>
            <person name="Li S.-J."/>
            <person name="Li L."/>
            <person name="Sheng Q.-H."/>
            <person name="Wu D.-Q."/>
            <person name="Li L."/>
            <person name="Zeng R."/>
        </authorList>
    </citation>
    <scope>PHOSPHORYLATION [LARGE SCALE ANALYSIS] AT SER-1182</scope>
    <scope>IDENTIFICATION BY MASS SPECTROMETRY [LARGE SCALE ANALYSIS]</scope>
    <source>
        <tissue>Embryonic kidney</tissue>
    </source>
</reference>
<reference key="11">
    <citation type="journal article" date="2008" name="J. Proteome Res.">
        <title>Combining protein-based IMAC, peptide-based IMAC, and MudPIT for efficient phosphoproteomic analysis.</title>
        <authorList>
            <person name="Cantin G.T."/>
            <person name="Yi W."/>
            <person name="Lu B."/>
            <person name="Park S.K."/>
            <person name="Xu T."/>
            <person name="Lee J.-D."/>
            <person name="Yates J.R. III"/>
        </authorList>
    </citation>
    <scope>IDENTIFICATION BY MASS SPECTROMETRY [LARGE SCALE ANALYSIS]</scope>
    <source>
        <tissue>Cervix carcinoma</tissue>
    </source>
</reference>
<reference key="12">
    <citation type="journal article" date="2008" name="Proc. Natl. Acad. Sci. U.S.A.">
        <title>A quantitative atlas of mitotic phosphorylation.</title>
        <authorList>
            <person name="Dephoure N."/>
            <person name="Zhou C."/>
            <person name="Villen J."/>
            <person name="Beausoleil S.A."/>
            <person name="Bakalarski C.E."/>
            <person name="Elledge S.J."/>
            <person name="Gygi S.P."/>
        </authorList>
    </citation>
    <scope>PHOSPHORYLATION [LARGE SCALE ANALYSIS] AT SER-216; SER-1107; SER-1182; THR-1232; SER-1721; SER-1779 AND SER-1799</scope>
    <scope>IDENTIFICATION BY MASS SPECTROMETRY [LARGE SCALE ANALYSIS]</scope>
    <source>
        <tissue>Cervix carcinoma</tissue>
    </source>
</reference>
<reference key="13">
    <citation type="journal article" date="2009" name="Anal. Chem.">
        <title>Lys-N and trypsin cover complementary parts of the phosphoproteome in a refined SCX-based approach.</title>
        <authorList>
            <person name="Gauci S."/>
            <person name="Helbig A.O."/>
            <person name="Slijper M."/>
            <person name="Krijgsveld J."/>
            <person name="Heck A.J."/>
            <person name="Mohammed S."/>
        </authorList>
    </citation>
    <scope>IDENTIFICATION BY MASS SPECTROMETRY [LARGE SCALE ANALYSIS]</scope>
</reference>
<reference key="14">
    <citation type="journal article" date="2009" name="Sci. Signal.">
        <title>Quantitative phosphoproteomic analysis of T cell receptor signaling reveals system-wide modulation of protein-protein interactions.</title>
        <authorList>
            <person name="Mayya V."/>
            <person name="Lundgren D.H."/>
            <person name="Hwang S.-I."/>
            <person name="Rezaul K."/>
            <person name="Wu L."/>
            <person name="Eng J.K."/>
            <person name="Rodionov V."/>
            <person name="Han D.K."/>
        </authorList>
    </citation>
    <scope>PHOSPHORYLATION [LARGE SCALE ANALYSIS] AT SER-1182 AND SER-1721</scope>
    <scope>IDENTIFICATION BY MASS SPECTROMETRY [LARGE SCALE ANALYSIS]</scope>
    <source>
        <tissue>Leukemic T-cell</tissue>
    </source>
</reference>
<reference key="15">
    <citation type="journal article" date="2010" name="Sci. Signal.">
        <title>Quantitative phosphoproteomics reveals widespread full phosphorylation site occupancy during mitosis.</title>
        <authorList>
            <person name="Olsen J.V."/>
            <person name="Vermeulen M."/>
            <person name="Santamaria A."/>
            <person name="Kumar C."/>
            <person name="Miller M.L."/>
            <person name="Jensen L.J."/>
            <person name="Gnad F."/>
            <person name="Cox J."/>
            <person name="Jensen T.S."/>
            <person name="Nigg E.A."/>
            <person name="Brunak S."/>
            <person name="Mann M."/>
        </authorList>
    </citation>
    <scope>PHOSPHORYLATION [LARGE SCALE ANALYSIS] AT SER-1721; SER-1779 AND SER-1799</scope>
    <scope>IDENTIFICATION BY MASS SPECTROMETRY [LARGE SCALE ANALYSIS]</scope>
    <source>
        <tissue>Cervix carcinoma</tissue>
    </source>
</reference>
<reference key="16">
    <citation type="journal article" date="2011" name="BMC Syst. Biol.">
        <title>Initial characterization of the human central proteome.</title>
        <authorList>
            <person name="Burkard T.R."/>
            <person name="Planyavsky M."/>
            <person name="Kaupe I."/>
            <person name="Breitwieser F.P."/>
            <person name="Buerckstuemmer T."/>
            <person name="Bennett K.L."/>
            <person name="Superti-Furga G."/>
            <person name="Colinge J."/>
        </authorList>
    </citation>
    <scope>IDENTIFICATION BY MASS SPECTROMETRY [LARGE SCALE ANALYSIS]</scope>
</reference>
<reference key="17">
    <citation type="journal article" date="2013" name="J. Proteome Res.">
        <title>Toward a comprehensive characterization of a human cancer cell phosphoproteome.</title>
        <authorList>
            <person name="Zhou H."/>
            <person name="Di Palma S."/>
            <person name="Preisinger C."/>
            <person name="Peng M."/>
            <person name="Polat A.N."/>
            <person name="Heck A.J."/>
            <person name="Mohammed S."/>
        </authorList>
    </citation>
    <scope>PHOSPHORYLATION [LARGE SCALE ANALYSIS] AT SER-216; SER-256; SER-424; SER-512; SER-557; SER-562; SER-589; SER-655; SER-1083; SER-1107; SER-1143; SER-1173; SER-1182; SER-1199; THR-1232; SER-1238; SER-1275; SER-1328; THR-1330; SER-1501; SER-1512 AND SER-1721</scope>
    <scope>IDENTIFICATION BY MASS SPECTROMETRY [LARGE SCALE ANALYSIS]</scope>
    <source>
        <tissue>Cervix carcinoma</tissue>
        <tissue>Erythroleukemia</tissue>
    </source>
</reference>
<reference key="18">
    <citation type="journal article" date="2014" name="J. Proteomics">
        <title>An enzyme assisted RP-RPLC approach for in-depth analysis of human liver phosphoproteome.</title>
        <authorList>
            <person name="Bian Y."/>
            <person name="Song C."/>
            <person name="Cheng K."/>
            <person name="Dong M."/>
            <person name="Wang F."/>
            <person name="Huang J."/>
            <person name="Sun D."/>
            <person name="Wang L."/>
            <person name="Ye M."/>
            <person name="Zou H."/>
        </authorList>
    </citation>
    <scope>PHOSPHORYLATION [LARGE SCALE ANALYSIS] AT SER-246; SER-1182; THR-1211; SER-1696 AND SER-1799</scope>
    <scope>IDENTIFICATION BY MASS SPECTROMETRY [LARGE SCALE ANALYSIS]</scope>
    <source>
        <tissue>Liver</tissue>
    </source>
</reference>
<reference key="19">
    <citation type="journal article" date="2018" name="Cell Rep.">
        <title>A Dock-and-Lock Mechanism Clusters ADAM10 at Cell-Cell Junctions to Promote alpha-Toxin Cytotoxicity.</title>
        <authorList>
            <person name="Shah J."/>
            <person name="Rouaud F."/>
            <person name="Guerrera D."/>
            <person name="Vasileva E."/>
            <person name="Popov L.M."/>
            <person name="Kelley W.L."/>
            <person name="Rubinstein E."/>
            <person name="Carette J.E."/>
            <person name="Amieva M.R."/>
            <person name="Citi S."/>
        </authorList>
    </citation>
    <scope>FUNCTION</scope>
    <scope>INTERACTION WITH ADAM10</scope>
    <scope>SUBCELLULAR LOCATION</scope>
</reference>
<reference key="20">
    <citation type="journal article" date="2005" name="J. Biol. Chem.">
        <title>Solution structure of AF-6 PDZ domain and its interaction with the C-terminal peptides from Neurexin and Bcr.</title>
        <authorList>
            <person name="Zhou H."/>
            <person name="Xu Y."/>
            <person name="Yang Y."/>
            <person name="Huang A."/>
            <person name="Wu J."/>
            <person name="Shi Y."/>
        </authorList>
    </citation>
    <scope>STRUCTURE BY NMR OF 1003-1094 IN COMPLEX WITH NRXN1 AND BCR</scope>
</reference>
<reference key="21">
    <citation type="journal article" date="2006" name="Angew. Chem. Int. Ed.">
        <title>Discovery of low-molecular-weight ligands for the AF6 PDZ domain.</title>
        <authorList>
            <person name="Joshi M."/>
            <person name="Vargas C."/>
            <person name="Boisguerin P."/>
            <person name="Diehl A."/>
            <person name="Krause G."/>
            <person name="Schmieder P."/>
            <person name="Moelling K."/>
            <person name="Hagen V."/>
            <person name="Schade M."/>
            <person name="Oschkinat H."/>
        </authorList>
    </citation>
    <scope>STRUCTURE BY NMR OF 1001-1095</scope>
</reference>
<dbReference type="EMBL" id="U02478">
    <property type="protein sequence ID" value="AAC50059.1"/>
    <property type="molecule type" value="mRNA"/>
</dbReference>
<dbReference type="EMBL" id="AB011399">
    <property type="protein sequence ID" value="BAA32483.1"/>
    <property type="molecule type" value="Genomic_DNA"/>
</dbReference>
<dbReference type="EMBL" id="AB011399">
    <property type="protein sequence ID" value="BAA32484.1"/>
    <property type="molecule type" value="Genomic_DNA"/>
</dbReference>
<dbReference type="EMBL" id="AB011399">
    <property type="protein sequence ID" value="BAA32485.1"/>
    <property type="molecule type" value="Genomic_DNA"/>
</dbReference>
<dbReference type="EMBL" id="AL009178">
    <property type="status" value="NOT_ANNOTATED_CDS"/>
    <property type="molecule type" value="Genomic_DNA"/>
</dbReference>
<dbReference type="EMBL" id="AL049698">
    <property type="status" value="NOT_ANNOTATED_CDS"/>
    <property type="molecule type" value="Genomic_DNA"/>
</dbReference>
<dbReference type="EMBL" id="AL731868">
    <property type="status" value="NOT_ANNOTATED_CDS"/>
    <property type="molecule type" value="Genomic_DNA"/>
</dbReference>
<dbReference type="EMBL" id="CH471051">
    <property type="protein sequence ID" value="EAW47482.1"/>
    <property type="molecule type" value="Genomic_DNA"/>
</dbReference>
<dbReference type="EMBL" id="AB209420">
    <property type="protein sequence ID" value="BAD92657.1"/>
    <property type="molecule type" value="mRNA"/>
</dbReference>
<dbReference type="EMBL" id="AL161973">
    <property type="protein sequence ID" value="CAB82312.1"/>
    <property type="status" value="ALT_FRAME"/>
    <property type="molecule type" value="mRNA"/>
</dbReference>
<dbReference type="CCDS" id="CCDS47517.1">
    <molecule id="P55196-6"/>
</dbReference>
<dbReference type="CCDS" id="CCDS75553.1">
    <molecule id="P55196-3"/>
</dbReference>
<dbReference type="CCDS" id="CCDS94034.1">
    <molecule id="P55196-4"/>
</dbReference>
<dbReference type="PIR" id="T47137">
    <property type="entry name" value="T47137"/>
</dbReference>
<dbReference type="RefSeq" id="NP_001035089.1">
    <molecule id="P55196-6"/>
    <property type="nucleotide sequence ID" value="NM_001040000.3"/>
</dbReference>
<dbReference type="RefSeq" id="NP_001193937.1">
    <molecule id="P55196-3"/>
    <property type="nucleotide sequence ID" value="NM_001207008.2"/>
</dbReference>
<dbReference type="RefSeq" id="NP_001278893.1">
    <property type="nucleotide sequence ID" value="NM_001291964.1"/>
</dbReference>
<dbReference type="RefSeq" id="NP_001353249.1">
    <molecule id="P55196-4"/>
    <property type="nucleotide sequence ID" value="NM_001366320.2"/>
</dbReference>
<dbReference type="RefSeq" id="XP_005267053.1">
    <property type="nucleotide sequence ID" value="XM_005266996.3"/>
</dbReference>
<dbReference type="PDB" id="1T2M">
    <property type="method" value="NMR"/>
    <property type="chains" value="A=1003-1094"/>
</dbReference>
<dbReference type="PDB" id="1XZ9">
    <property type="method" value="NMR"/>
    <property type="chains" value="A=1001-1096"/>
</dbReference>
<dbReference type="PDB" id="2AIN">
    <property type="method" value="NMR"/>
    <property type="chains" value="A=1003-1094"/>
</dbReference>
<dbReference type="PDB" id="2EXG">
    <property type="method" value="NMR"/>
    <property type="chains" value="A=1001-1096"/>
</dbReference>
<dbReference type="PDB" id="5A6C">
    <property type="method" value="X-ray"/>
    <property type="resolution" value="2.90 A"/>
    <property type="chains" value="A/B=1709-1746"/>
</dbReference>
<dbReference type="PDB" id="7QCR">
    <property type="method" value="X-ray"/>
    <property type="resolution" value="2.28 A"/>
    <property type="chains" value="A/B=1002-1097"/>
</dbReference>
<dbReference type="PDBsum" id="1T2M"/>
<dbReference type="PDBsum" id="1XZ9"/>
<dbReference type="PDBsum" id="2AIN"/>
<dbReference type="PDBsum" id="2EXG"/>
<dbReference type="PDBsum" id="5A6C"/>
<dbReference type="PDBsum" id="7QCR"/>
<dbReference type="BMRB" id="P55196"/>
<dbReference type="SMR" id="P55196"/>
<dbReference type="BioGRID" id="110447">
    <property type="interactions" value="321"/>
</dbReference>
<dbReference type="CORUM" id="P55196"/>
<dbReference type="ELM" id="P55196"/>
<dbReference type="FunCoup" id="P55196">
    <property type="interactions" value="1676"/>
</dbReference>
<dbReference type="IntAct" id="P55196">
    <property type="interactions" value="75"/>
</dbReference>
<dbReference type="MINT" id="P55196"/>
<dbReference type="STRING" id="9606.ENSP00000355771"/>
<dbReference type="DrugBank" id="DB08574">
    <property type="generic name" value="(5R)-2-sulfanyl-5-[4-(trifluoromethyl)benzyl]-1,3-thiazol-4(5H)-one"/>
</dbReference>
<dbReference type="GlyGen" id="P55196">
    <property type="glycosylation" value="5 sites, 1 O-linked glycan (4 sites)"/>
</dbReference>
<dbReference type="iPTMnet" id="P55196"/>
<dbReference type="PhosphoSitePlus" id="P55196"/>
<dbReference type="SwissPalm" id="P55196"/>
<dbReference type="BioMuta" id="AFDN"/>
<dbReference type="DMDM" id="288558835"/>
<dbReference type="jPOST" id="P55196"/>
<dbReference type="MassIVE" id="P55196"/>
<dbReference type="PaxDb" id="9606-ENSP00000375960"/>
<dbReference type="PeptideAtlas" id="P55196"/>
<dbReference type="ProteomicsDB" id="56796">
    <molecule id="P55196-4"/>
</dbReference>
<dbReference type="ProteomicsDB" id="56797">
    <molecule id="P55196-1"/>
</dbReference>
<dbReference type="ProteomicsDB" id="56798">
    <molecule id="P55196-2"/>
</dbReference>
<dbReference type="ProteomicsDB" id="56799">
    <molecule id="P55196-3"/>
</dbReference>
<dbReference type="ProteomicsDB" id="56800">
    <molecule id="P55196-5"/>
</dbReference>
<dbReference type="ProteomicsDB" id="56801">
    <molecule id="P55196-6"/>
</dbReference>
<dbReference type="Pumba" id="P55196"/>
<dbReference type="Antibodypedia" id="4608">
    <property type="antibodies" value="263 antibodies from 33 providers"/>
</dbReference>
<dbReference type="DNASU" id="4301"/>
<dbReference type="Ensembl" id="ENST00000392108.7">
    <molecule id="P55196-6"/>
    <property type="protein sequence ID" value="ENSP00000375956.3"/>
    <property type="gene ID" value="ENSG00000130396.22"/>
</dbReference>
<dbReference type="Ensembl" id="ENST00000392112.5">
    <molecule id="P55196-3"/>
    <property type="protein sequence ID" value="ENSP00000375960.2"/>
    <property type="gene ID" value="ENSG00000130396.22"/>
</dbReference>
<dbReference type="Ensembl" id="ENST00000400822.7">
    <molecule id="P55196-5"/>
    <property type="protein sequence ID" value="ENSP00000383623.3"/>
    <property type="gene ID" value="ENSG00000130396.22"/>
</dbReference>
<dbReference type="Ensembl" id="ENST00000447894.6">
    <molecule id="P55196-4"/>
    <property type="protein sequence ID" value="ENSP00000404595.2"/>
    <property type="gene ID" value="ENSG00000130396.22"/>
</dbReference>
<dbReference type="GeneID" id="4301"/>
<dbReference type="KEGG" id="hsa:4301"/>
<dbReference type="UCSC" id="uc003qwc.3">
    <molecule id="P55196-4"/>
    <property type="organism name" value="human"/>
</dbReference>
<dbReference type="AGR" id="HGNC:7137"/>
<dbReference type="CTD" id="4301"/>
<dbReference type="DisGeNET" id="4301"/>
<dbReference type="GeneCards" id="AFDN"/>
<dbReference type="HGNC" id="HGNC:7137">
    <property type="gene designation" value="AFDN"/>
</dbReference>
<dbReference type="HPA" id="ENSG00000130396">
    <property type="expression patterns" value="Low tissue specificity"/>
</dbReference>
<dbReference type="MalaCards" id="AFDN"/>
<dbReference type="MIM" id="159559">
    <property type="type" value="gene"/>
</dbReference>
<dbReference type="neXtProt" id="NX_P55196"/>
<dbReference type="OpenTargets" id="ENSG00000130396"/>
<dbReference type="VEuPathDB" id="HostDB:ENSG00000130396"/>
<dbReference type="eggNOG" id="KOG1892">
    <property type="taxonomic scope" value="Eukaryota"/>
</dbReference>
<dbReference type="GeneTree" id="ENSGT00940000155237"/>
<dbReference type="InParanoid" id="P55196"/>
<dbReference type="OrthoDB" id="6260541at2759"/>
<dbReference type="PAN-GO" id="P55196">
    <property type="GO annotations" value="3 GO annotations based on evolutionary models"/>
</dbReference>
<dbReference type="PhylomeDB" id="P55196"/>
<dbReference type="TreeFam" id="TF350731"/>
<dbReference type="PathwayCommons" id="P55196"/>
<dbReference type="Reactome" id="R-HSA-418990">
    <molecule id="P55196-2"/>
    <property type="pathway name" value="Adherens junctions interactions"/>
</dbReference>
<dbReference type="SignaLink" id="P55196"/>
<dbReference type="SIGNOR" id="P55196"/>
<dbReference type="BioGRID-ORCS" id="4301">
    <property type="hits" value="46 hits in 1162 CRISPR screens"/>
</dbReference>
<dbReference type="CD-CODE" id="FB4E32DD">
    <property type="entry name" value="Presynaptic clusters and postsynaptic densities"/>
</dbReference>
<dbReference type="ChiTaRS" id="AFDN">
    <property type="organism name" value="human"/>
</dbReference>
<dbReference type="EvolutionaryTrace" id="P55196"/>
<dbReference type="GeneWiki" id="MLLT4"/>
<dbReference type="GenomeRNAi" id="4301"/>
<dbReference type="Pharos" id="P55196">
    <property type="development level" value="Tbio"/>
</dbReference>
<dbReference type="PRO" id="PR:P55196"/>
<dbReference type="Proteomes" id="UP000005640">
    <property type="component" value="Chromosome 6"/>
</dbReference>
<dbReference type="RNAct" id="P55196">
    <property type="molecule type" value="protein"/>
</dbReference>
<dbReference type="Bgee" id="ENSG00000130396">
    <property type="expression patterns" value="Expressed in right uterine tube and 181 other cell types or tissues"/>
</dbReference>
<dbReference type="ExpressionAtlas" id="P55196">
    <property type="expression patterns" value="baseline and differential"/>
</dbReference>
<dbReference type="GO" id="GO:0005912">
    <property type="term" value="C:adherens junction"/>
    <property type="evidence" value="ECO:0000318"/>
    <property type="project" value="GO_Central"/>
</dbReference>
<dbReference type="GO" id="GO:0030054">
    <property type="term" value="C:cell junction"/>
    <property type="evidence" value="ECO:0000314"/>
    <property type="project" value="HPA"/>
</dbReference>
<dbReference type="GO" id="GO:0044291">
    <property type="term" value="C:cell-cell contact zone"/>
    <property type="evidence" value="ECO:0000314"/>
    <property type="project" value="ARUK-UCL"/>
</dbReference>
<dbReference type="GO" id="GO:0005911">
    <property type="term" value="C:cell-cell junction"/>
    <property type="evidence" value="ECO:0000314"/>
    <property type="project" value="ARUK-UCL"/>
</dbReference>
<dbReference type="GO" id="GO:0005829">
    <property type="term" value="C:cytosol"/>
    <property type="evidence" value="ECO:0000314"/>
    <property type="project" value="HPA"/>
</dbReference>
<dbReference type="GO" id="GO:0016607">
    <property type="term" value="C:nuclear speck"/>
    <property type="evidence" value="ECO:0000314"/>
    <property type="project" value="HPA"/>
</dbReference>
<dbReference type="GO" id="GO:0005654">
    <property type="term" value="C:nucleoplasm"/>
    <property type="evidence" value="ECO:0000314"/>
    <property type="project" value="HPA"/>
</dbReference>
<dbReference type="GO" id="GO:0005886">
    <property type="term" value="C:plasma membrane"/>
    <property type="evidence" value="ECO:0000314"/>
    <property type="project" value="HPA"/>
</dbReference>
<dbReference type="GO" id="GO:0046930">
    <property type="term" value="C:pore complex"/>
    <property type="evidence" value="ECO:0000315"/>
    <property type="project" value="UniProtKB"/>
</dbReference>
<dbReference type="GO" id="GO:0070160">
    <property type="term" value="C:tight junction"/>
    <property type="evidence" value="ECO:0000314"/>
    <property type="project" value="ARUK-UCL"/>
</dbReference>
<dbReference type="GO" id="GO:0051015">
    <property type="term" value="F:actin filament binding"/>
    <property type="evidence" value="ECO:0000314"/>
    <property type="project" value="ARUK-UCL"/>
</dbReference>
<dbReference type="GO" id="GO:0045296">
    <property type="term" value="F:cadherin binding"/>
    <property type="evidence" value="ECO:0007005"/>
    <property type="project" value="BHF-UCL"/>
</dbReference>
<dbReference type="GO" id="GO:0050839">
    <property type="term" value="F:cell adhesion molecule binding"/>
    <property type="evidence" value="ECO:0000318"/>
    <property type="project" value="GO_Central"/>
</dbReference>
<dbReference type="GO" id="GO:0031267">
    <property type="term" value="F:small GTPase binding"/>
    <property type="evidence" value="ECO:0000353"/>
    <property type="project" value="UniProtKB"/>
</dbReference>
<dbReference type="GO" id="GO:0070830">
    <property type="term" value="P:bicellular tight junction assembly"/>
    <property type="evidence" value="ECO:0000315"/>
    <property type="project" value="ARUK-UCL"/>
</dbReference>
<dbReference type="GO" id="GO:0007155">
    <property type="term" value="P:cell adhesion"/>
    <property type="evidence" value="ECO:0000304"/>
    <property type="project" value="ProtInc"/>
</dbReference>
<dbReference type="GO" id="GO:0044331">
    <property type="term" value="P:cell-cell adhesion mediated by cadherin"/>
    <property type="evidence" value="ECO:0000250"/>
    <property type="project" value="ARUK-UCL"/>
</dbReference>
<dbReference type="GO" id="GO:0007267">
    <property type="term" value="P:cell-cell signaling"/>
    <property type="evidence" value="ECO:0000304"/>
    <property type="project" value="ProtInc"/>
</dbReference>
<dbReference type="GO" id="GO:0090557">
    <property type="term" value="P:establishment of endothelial intestinal barrier"/>
    <property type="evidence" value="ECO:0000315"/>
    <property type="project" value="UniProtKB"/>
</dbReference>
<dbReference type="GO" id="GO:0061951">
    <property type="term" value="P:establishment of protein localization to plasma membrane"/>
    <property type="evidence" value="ECO:0000250"/>
    <property type="project" value="ARUK-UCL"/>
</dbReference>
<dbReference type="GO" id="GO:0030336">
    <property type="term" value="P:negative regulation of cell migration"/>
    <property type="evidence" value="ECO:0000315"/>
    <property type="project" value="ARUK-UCL"/>
</dbReference>
<dbReference type="GO" id="GO:0046931">
    <property type="term" value="P:pore complex assembly"/>
    <property type="evidence" value="ECO:0000315"/>
    <property type="project" value="UniProtKB"/>
</dbReference>
<dbReference type="GO" id="GO:0022409">
    <property type="term" value="P:positive regulation of cell-cell adhesion"/>
    <property type="evidence" value="ECO:0000315"/>
    <property type="project" value="UniProtKB"/>
</dbReference>
<dbReference type="GO" id="GO:2000049">
    <property type="term" value="P:positive regulation of cell-cell adhesion mediated by cadherin"/>
    <property type="evidence" value="ECO:0000315"/>
    <property type="project" value="ARUK-UCL"/>
</dbReference>
<dbReference type="GO" id="GO:0010628">
    <property type="term" value="P:positive regulation of gene expression"/>
    <property type="evidence" value="ECO:0000315"/>
    <property type="project" value="UniProtKB"/>
</dbReference>
<dbReference type="GO" id="GO:0032880">
    <property type="term" value="P:regulation of protein localization"/>
    <property type="evidence" value="ECO:0000318"/>
    <property type="project" value="GO_Central"/>
</dbReference>
<dbReference type="GO" id="GO:0007165">
    <property type="term" value="P:signal transduction"/>
    <property type="evidence" value="ECO:0000304"/>
    <property type="project" value="ProtInc"/>
</dbReference>
<dbReference type="CDD" id="cd22711">
    <property type="entry name" value="FHA_AFDN"/>
    <property type="match status" value="1"/>
</dbReference>
<dbReference type="CDD" id="cd15471">
    <property type="entry name" value="Myo5p-like_CBD_afadin"/>
    <property type="match status" value="1"/>
</dbReference>
<dbReference type="CDD" id="cd06789">
    <property type="entry name" value="PDZ_AFDN-like"/>
    <property type="match status" value="1"/>
</dbReference>
<dbReference type="CDD" id="cd01782">
    <property type="entry name" value="RA1_Afadin"/>
    <property type="match status" value="1"/>
</dbReference>
<dbReference type="CDD" id="cd01781">
    <property type="entry name" value="RA2_Afadin"/>
    <property type="match status" value="1"/>
</dbReference>
<dbReference type="FunFam" id="2.30.42.10:FF:000032">
    <property type="entry name" value="Afadin isoform A"/>
    <property type="match status" value="1"/>
</dbReference>
<dbReference type="FunFam" id="3.10.20.90:FF:000033">
    <property type="entry name" value="afadin isoform X1"/>
    <property type="match status" value="1"/>
</dbReference>
<dbReference type="FunFam" id="2.60.200.20:FF:000006">
    <property type="entry name" value="Afadin, adherens junction formation factor"/>
    <property type="match status" value="1"/>
</dbReference>
<dbReference type="FunFam" id="3.10.20.90:FF:000025">
    <property type="entry name" value="Afadin, adherens junction formation factor"/>
    <property type="match status" value="1"/>
</dbReference>
<dbReference type="Gene3D" id="2.30.42.10">
    <property type="match status" value="1"/>
</dbReference>
<dbReference type="Gene3D" id="2.60.200.20">
    <property type="match status" value="1"/>
</dbReference>
<dbReference type="Gene3D" id="3.10.20.90">
    <property type="entry name" value="Phosphatidylinositol 3-kinase Catalytic Subunit, Chain A, domain 1"/>
    <property type="match status" value="2"/>
</dbReference>
<dbReference type="InterPro" id="IPR028842">
    <property type="entry name" value="Afadin"/>
</dbReference>
<dbReference type="InterPro" id="IPR037977">
    <property type="entry name" value="CBD_Afadin"/>
</dbReference>
<dbReference type="InterPro" id="IPR002710">
    <property type="entry name" value="Dilute_dom"/>
</dbReference>
<dbReference type="InterPro" id="IPR000253">
    <property type="entry name" value="FHA_dom"/>
</dbReference>
<dbReference type="InterPro" id="IPR001478">
    <property type="entry name" value="PDZ"/>
</dbReference>
<dbReference type="InterPro" id="IPR036034">
    <property type="entry name" value="PDZ_sf"/>
</dbReference>
<dbReference type="InterPro" id="IPR000159">
    <property type="entry name" value="RA_dom"/>
</dbReference>
<dbReference type="InterPro" id="IPR008984">
    <property type="entry name" value="SMAD_FHA_dom_sf"/>
</dbReference>
<dbReference type="InterPro" id="IPR029071">
    <property type="entry name" value="Ubiquitin-like_domsf"/>
</dbReference>
<dbReference type="PANTHER" id="PTHR10398">
    <property type="entry name" value="AFADIN"/>
    <property type="match status" value="1"/>
</dbReference>
<dbReference type="PANTHER" id="PTHR10398:SF2">
    <property type="entry name" value="AFADIN"/>
    <property type="match status" value="1"/>
</dbReference>
<dbReference type="Pfam" id="PF01843">
    <property type="entry name" value="DIL"/>
    <property type="match status" value="1"/>
</dbReference>
<dbReference type="Pfam" id="PF00498">
    <property type="entry name" value="FHA"/>
    <property type="match status" value="1"/>
</dbReference>
<dbReference type="Pfam" id="PF00595">
    <property type="entry name" value="PDZ"/>
    <property type="match status" value="1"/>
</dbReference>
<dbReference type="Pfam" id="PF00788">
    <property type="entry name" value="RA"/>
    <property type="match status" value="2"/>
</dbReference>
<dbReference type="SMART" id="SM01132">
    <property type="entry name" value="DIL"/>
    <property type="match status" value="1"/>
</dbReference>
<dbReference type="SMART" id="SM00240">
    <property type="entry name" value="FHA"/>
    <property type="match status" value="1"/>
</dbReference>
<dbReference type="SMART" id="SM00228">
    <property type="entry name" value="PDZ"/>
    <property type="match status" value="1"/>
</dbReference>
<dbReference type="SMART" id="SM00314">
    <property type="entry name" value="RA"/>
    <property type="match status" value="2"/>
</dbReference>
<dbReference type="SUPFAM" id="SSF50156">
    <property type="entry name" value="PDZ domain-like"/>
    <property type="match status" value="1"/>
</dbReference>
<dbReference type="SUPFAM" id="SSF49879">
    <property type="entry name" value="SMAD/FHA domain"/>
    <property type="match status" value="1"/>
</dbReference>
<dbReference type="SUPFAM" id="SSF54236">
    <property type="entry name" value="Ubiquitin-like"/>
    <property type="match status" value="2"/>
</dbReference>
<dbReference type="PROSITE" id="PS51126">
    <property type="entry name" value="DILUTE"/>
    <property type="match status" value="1"/>
</dbReference>
<dbReference type="PROSITE" id="PS50106">
    <property type="entry name" value="PDZ"/>
    <property type="match status" value="1"/>
</dbReference>
<dbReference type="PROSITE" id="PS50200">
    <property type="entry name" value="RA"/>
    <property type="match status" value="2"/>
</dbReference>
<sequence>MSAGGRDEERRKLADIIHHWNANRLDLFEISQPTEDLEFHGVMRFYFQDKAAGNFATKCIRVSSTATTQDVIETLAEKFRPDMRMLSSPKYSLYEVHVSGERRLDIDEKPLVVQLNWNKDDREGRFVLKNENDAIPPKKAQSNGPEKQEKEGVIQNFKRTLSKKEKKEKKKREKEALRQASDKDDRPFQGEDVENSRLAAEVYKDMPETSFTRTISNPEVVMKRRRQQKLEKRMQEFRSSDGRPDSGGTLRIYADSLKPNIPYKTILLSTTDPADFAVAEALEKYGLEKENPKDYCIARVMLPPGAQHSDEKGAKEIILDDDECPLQIFREWPSDKGILVFQLKRRPPDHIPKKTKKHLEGKTPKGKERADGSGYGSTLPPEKLPYLVELSPGRRNHFAYYNYHTYEDGSDSRDKPKLYRLQLSVTEVGTEKLDDNSIQLFGPGIQPHHCDLTNMDGVVTVTPRSMDAETYVEGQRISETTMLQSGMKVQFGASHVFKFVDPSQDHALAKRSVDGGLMVKGPRHKPGIVQETTFDLGGDIHSGTALPTSKSTTRLDSDRVSSASSTAERGMVKPMIRVEQQPDYRRQESRTQDASGPELILPASIEFRESSEDSFLSAIINYTNSSTVHFKLSPTYVLYMACRYVLSNQYRPDISPTERTHKVIAVVNKMVSMMEGVIQKQKNIAGALAFWMANASELLNFIKQDRDLSRITLDAQDVLAHLVQMAFKYLVHCLQSELNNYMPAFLDDPEENSLQRPKIDDVLHTLTGAMSLLRRCRVNAALTIQLFSQLFHFINMWLFNRLVTDPDSGLCSHYWGAIIRQQLGHIEAWAEKQGLELAADCHLSRIVQATTLLTMDKYAPDDIPNINSTCFKLNSLQLQALLQNYHCAPDEPFIPTDLIENVVTVAENTADELARSDGREVQLEEDPDLQLPFLLPEDGYSCDVVRNIPNGLQEFLDPLCQRGFCRLIPHTRSPGTWTIYFEGADYESHLLRENTELAQPLRKEPEIITVTLKKQNGMGLSIVAAKGAGQDKLGIYVKSVVKGGAADVDGRLAAGDQLLSVDGRSLVGLSQERAAELMTRTSSVVTLEVAKQGAIYHGLATLLNQPSPMMQRISDRRGSGKPRPKSEGFELYNNSTQNGSPESPQLPWAEYSEPKKLPGDDRLMKNRADHRSSPNVANQPPSPGGKSAYASGTTAKITSVSTGNLCTEEQTPPPRPEAYPIPTQTYTREYFTFPASKSQDRMAPPQNQWPNYEEKPHMHTDSNHSSIAIQRVTRSQEELREDKAYQLERHRIEAAMDRKSDSDMWINQSSSLDSSTSSQEHLNHSSKSVTPASTLTKSGPGRWKTPAAIPATPVAVSQPIRTDLPPPPPPPPVHYAGDFDGMSMDLPLPPPPSANQIGLPSAQVAAAERRKREEHQRWYEKEKARLEEERERKRREQERKLGQMRTQSLNPAPFSPLTAQQMKPEKPSTLQRPQETVIRELQPQQQPRTIERRDLQYITVSKEELSSGDSLSPDPWKRDAKEKLEKQQQMHIVDMLSKEIQELQSKPDRSAEESDRLRKLMLEWQFQKRLQESKQKDEDDEEEEDDDVDTMLIMQRLEAERRARLQDEERRRQQQLEEMRKREAEDRARQEEERRRQEEERTKRDAEEKRRQEEGYYSRLEAERRRQHDEAARRLLEPEAPGLCRPPLPRDYEPPSPSPAPGAPPPPPQRNASYLKTQVLSPDSLFTAKFVAYNEEEEEEDCSLAGPNSYPGSTGAAVGAHDACRDAKEKRSKSQDADSPGSSGAPENLTFKERQRLFSQGQDVSNKVKASRKLTELENELNTK</sequence>
<gene>
    <name evidence="16" type="primary">AFDN</name>
    <name type="synonym">AF6</name>
    <name type="synonym">MLLT4</name>
</gene>
<organism>
    <name type="scientific">Homo sapiens</name>
    <name type="common">Human</name>
    <dbReference type="NCBI Taxonomy" id="9606"/>
    <lineage>
        <taxon>Eukaryota</taxon>
        <taxon>Metazoa</taxon>
        <taxon>Chordata</taxon>
        <taxon>Craniata</taxon>
        <taxon>Vertebrata</taxon>
        <taxon>Euteleostomi</taxon>
        <taxon>Mammalia</taxon>
        <taxon>Eutheria</taxon>
        <taxon>Euarchontoglires</taxon>
        <taxon>Primates</taxon>
        <taxon>Haplorrhini</taxon>
        <taxon>Catarrhini</taxon>
        <taxon>Hominidae</taxon>
        <taxon>Homo</taxon>
    </lineage>
</organism>
<feature type="chain" id="PRO_0000215918" description="Afadin">
    <location>
        <begin position="1"/>
        <end position="1824"/>
    </location>
</feature>
<feature type="domain" description="Ras-associating 1" evidence="6">
    <location>
        <begin position="39"/>
        <end position="133"/>
    </location>
</feature>
<feature type="domain" description="Ras-associating 2" evidence="6">
    <location>
        <begin position="246"/>
        <end position="348"/>
    </location>
</feature>
<feature type="domain" description="FHA">
    <location>
        <begin position="426"/>
        <end position="492"/>
    </location>
</feature>
<feature type="domain" description="Dilute" evidence="7">
    <location>
        <begin position="668"/>
        <end position="908"/>
    </location>
</feature>
<feature type="domain" description="PDZ" evidence="5">
    <location>
        <begin position="1007"/>
        <end position="1093"/>
    </location>
</feature>
<feature type="region of interest" description="Disordered" evidence="8">
    <location>
        <begin position="128"/>
        <end position="194"/>
    </location>
</feature>
<feature type="region of interest" description="Disordered" evidence="8">
    <location>
        <begin position="349"/>
        <end position="378"/>
    </location>
</feature>
<feature type="region of interest" description="Disordered" evidence="8">
    <location>
        <begin position="534"/>
        <end position="595"/>
    </location>
</feature>
<feature type="region of interest" description="Disordered" evidence="8">
    <location>
        <begin position="1107"/>
        <end position="1223"/>
    </location>
</feature>
<feature type="region of interest" description="Disordered" evidence="8">
    <location>
        <begin position="1235"/>
        <end position="1473"/>
    </location>
</feature>
<feature type="region of interest" description="Disordered" evidence="8">
    <location>
        <begin position="1501"/>
        <end position="1528"/>
    </location>
</feature>
<feature type="region of interest" description="Disordered" evidence="8">
    <location>
        <begin position="1569"/>
        <end position="1824"/>
    </location>
</feature>
<feature type="coiled-coil region" evidence="4">
    <location>
        <begin position="146"/>
        <end position="185"/>
    </location>
</feature>
<feature type="coiled-coil region" evidence="4">
    <location>
        <begin position="1408"/>
        <end position="1448"/>
    </location>
</feature>
<feature type="coiled-coil region" evidence="4">
    <location>
        <begin position="1523"/>
        <end position="1667"/>
    </location>
</feature>
<feature type="compositionally biased region" description="Basic residues" evidence="8">
    <location>
        <begin position="160"/>
        <end position="172"/>
    </location>
</feature>
<feature type="compositionally biased region" description="Basic and acidic residues" evidence="8">
    <location>
        <begin position="173"/>
        <end position="189"/>
    </location>
</feature>
<feature type="compositionally biased region" description="Basic and acidic residues" evidence="8">
    <location>
        <begin position="349"/>
        <end position="371"/>
    </location>
</feature>
<feature type="compositionally biased region" description="Basic and acidic residues" evidence="8">
    <location>
        <begin position="580"/>
        <end position="591"/>
    </location>
</feature>
<feature type="compositionally biased region" description="Basic and acidic residues" evidence="8">
    <location>
        <begin position="1113"/>
        <end position="1128"/>
    </location>
</feature>
<feature type="compositionally biased region" description="Polar residues" evidence="8">
    <location>
        <begin position="1132"/>
        <end position="1143"/>
    </location>
</feature>
<feature type="compositionally biased region" description="Basic and acidic residues" evidence="8">
    <location>
        <begin position="1152"/>
        <end position="1172"/>
    </location>
</feature>
<feature type="compositionally biased region" description="Polar residues" evidence="8">
    <location>
        <begin position="1190"/>
        <end position="1210"/>
    </location>
</feature>
<feature type="compositionally biased region" description="Basic and acidic residues" evidence="8">
    <location>
        <begin position="1252"/>
        <end position="1262"/>
    </location>
</feature>
<feature type="compositionally biased region" description="Basic and acidic residues" evidence="8">
    <location>
        <begin position="1274"/>
        <end position="1302"/>
    </location>
</feature>
<feature type="compositionally biased region" description="Low complexity" evidence="8">
    <location>
        <begin position="1309"/>
        <end position="1318"/>
    </location>
</feature>
<feature type="compositionally biased region" description="Polar residues" evidence="8">
    <location>
        <begin position="1325"/>
        <end position="1337"/>
    </location>
</feature>
<feature type="compositionally biased region" description="Low complexity" evidence="8">
    <location>
        <begin position="1345"/>
        <end position="1356"/>
    </location>
</feature>
<feature type="compositionally biased region" description="Pro residues" evidence="8">
    <location>
        <begin position="1364"/>
        <end position="1373"/>
    </location>
</feature>
<feature type="compositionally biased region" description="Basic and acidic residues" evidence="8">
    <location>
        <begin position="1407"/>
        <end position="1441"/>
    </location>
</feature>
<feature type="compositionally biased region" description="Basic and acidic residues" evidence="8">
    <location>
        <begin position="1515"/>
        <end position="1528"/>
    </location>
</feature>
<feature type="compositionally biased region" description="Acidic residues" evidence="8">
    <location>
        <begin position="1578"/>
        <end position="1589"/>
    </location>
</feature>
<feature type="compositionally biased region" description="Basic and acidic residues" evidence="8">
    <location>
        <begin position="1597"/>
        <end position="1677"/>
    </location>
</feature>
<feature type="compositionally biased region" description="Pro residues" evidence="8">
    <location>
        <begin position="1694"/>
        <end position="1709"/>
    </location>
</feature>
<feature type="compositionally biased region" description="Basic and acidic residues" evidence="8">
    <location>
        <begin position="1762"/>
        <end position="1776"/>
    </location>
</feature>
<feature type="compositionally biased region" description="Basic and acidic residues" evidence="8">
    <location>
        <begin position="1813"/>
        <end position="1824"/>
    </location>
</feature>
<feature type="site" description="Breakpoint for translocation to form KMT2A/MLL1-AFDN">
    <location>
        <position position="26"/>
    </location>
</feature>
<feature type="modified residue" description="Phosphoserine" evidence="19 22">
    <location>
        <position position="216"/>
    </location>
</feature>
<feature type="modified residue" description="Phosphoserine" evidence="23">
    <location>
        <position position="246"/>
    </location>
</feature>
<feature type="modified residue" description="Phosphoserine" evidence="22">
    <location>
        <position position="256"/>
    </location>
</feature>
<feature type="modified residue" description="Phosphoserine" evidence="2">
    <location>
        <position position="391"/>
    </location>
</feature>
<feature type="modified residue" description="Phosphoserine" evidence="22">
    <location>
        <position position="424"/>
    </location>
</feature>
<feature type="modified residue" description="Phosphoserine" evidence="22">
    <location>
        <position position="512"/>
    </location>
</feature>
<feature type="modified residue" description="Phosphoserine" evidence="22">
    <location>
        <position position="557"/>
    </location>
</feature>
<feature type="modified residue" description="Phosphoserine" evidence="22">
    <location>
        <position position="562"/>
    </location>
</feature>
<feature type="modified residue" description="Phosphoserine" evidence="22">
    <location>
        <position position="589"/>
    </location>
</feature>
<feature type="modified residue" description="Phosphoserine" evidence="22">
    <location>
        <position position="655"/>
    </location>
</feature>
<feature type="modified residue" description="Phosphoserine" evidence="22">
    <location>
        <position position="1083"/>
    </location>
</feature>
<feature type="modified residue" description="Phosphoserine" evidence="19 22">
    <location>
        <position position="1107"/>
    </location>
</feature>
<feature type="modified residue" description="Phosphoserine" evidence="3">
    <location>
        <position position="1126"/>
    </location>
</feature>
<feature type="modified residue" description="Phosphoserine" evidence="2">
    <location>
        <position position="1140"/>
    </location>
</feature>
<feature type="modified residue" description="Phosphoserine" evidence="22">
    <location>
        <position position="1143"/>
    </location>
</feature>
<feature type="modified residue" description="Phosphoserine" evidence="3">
    <location>
        <position position="1172"/>
    </location>
</feature>
<feature type="modified residue" description="Phosphoserine" evidence="22">
    <location>
        <position position="1173"/>
    </location>
</feature>
<feature type="modified residue" description="Phosphoserine" evidence="17 18 19 20 22 23">
    <location>
        <position position="1182"/>
    </location>
</feature>
<feature type="modified residue" description="Phosphoserine" evidence="22">
    <location>
        <position position="1199"/>
    </location>
</feature>
<feature type="modified residue" description="Phosphothreonine" evidence="23">
    <location>
        <position position="1211"/>
    </location>
</feature>
<feature type="modified residue" description="Phosphothreonine" evidence="19 22">
    <location>
        <position position="1232"/>
    </location>
</feature>
<feature type="modified residue" description="Phosphoserine" evidence="22">
    <location>
        <position position="1238"/>
    </location>
</feature>
<feature type="modified residue" description="Phosphoserine" evidence="22">
    <location>
        <position position="1275"/>
    </location>
</feature>
<feature type="modified residue" description="Phosphoserine" evidence="22">
    <location>
        <position position="1328"/>
    </location>
</feature>
<feature type="modified residue" description="Phosphothreonine" evidence="22">
    <location>
        <position position="1330"/>
    </location>
</feature>
<feature type="modified residue" description="Phosphoserine" evidence="22">
    <location>
        <position position="1501"/>
    </location>
</feature>
<feature type="modified residue" description="Phosphoserine" evidence="22">
    <location>
        <position position="1512"/>
    </location>
</feature>
<feature type="modified residue" description="Phosphoserine" evidence="23">
    <location>
        <position position="1696"/>
    </location>
</feature>
<feature type="modified residue" description="Phosphoserine" evidence="19 20 21 22">
    <location>
        <position position="1721"/>
    </location>
</feature>
<feature type="modified residue" description="Phosphoserine" evidence="3">
    <location>
        <position position="1774"/>
    </location>
</feature>
<feature type="modified residue" description="Phosphoserine" evidence="19 21">
    <location>
        <position position="1779"/>
    </location>
</feature>
<feature type="modified residue" description="Phosphoserine" evidence="19 21 23">
    <location>
        <position position="1799"/>
    </location>
</feature>
<feature type="modified residue" description="N6-acetyllysine" evidence="3">
    <location>
        <position position="1807"/>
    </location>
</feature>
<feature type="splice variant" id="VSP_038707" description="In isoform 1, isoform 2, isoform 3 and isoform 5." evidence="12 13">
    <location>
        <position position="139"/>
    </location>
</feature>
<feature type="splice variant" id="VSP_038708" description="In isoform 1, isoform 2 and isoform 3." evidence="13">
    <location>
        <begin position="393"/>
        <end position="407"/>
    </location>
</feature>
<feature type="splice variant" id="VSP_038709" description="In isoform 2 and isoform 3." evidence="15">
    <location>
        <position position="1048"/>
    </location>
</feature>
<feature type="splice variant" id="VSP_019257" description="In isoform 5." evidence="12">
    <original>R</original>
    <variation>RTAMPAISVLDL</variation>
    <location>
        <position position="1604"/>
    </location>
</feature>
<feature type="splice variant" id="VSP_000217" description="In isoform 1." evidence="13">
    <original>LQDEERRRQQQLEEMRKREAEDRA</original>
    <variation>VKGGVLWLCPSVVPILASACFPWG</variation>
    <location>
        <begin position="1605"/>
        <end position="1628"/>
    </location>
</feature>
<feature type="splice variant" id="VSP_041197" description="In isoform 6." evidence="14">
    <location>
        <begin position="1605"/>
        <end position="1606"/>
    </location>
</feature>
<feature type="splice variant" id="VSP_000218" description="In isoform 1." evidence="13">
    <location>
        <begin position="1629"/>
        <end position="1824"/>
    </location>
</feature>
<feature type="splice variant" id="VSP_041198" description="In isoform 6." evidence="14">
    <original>RRQE</original>
    <variation>VMVL</variation>
    <location>
        <begin position="1650"/>
        <end position="1653"/>
    </location>
</feature>
<feature type="splice variant" id="VSP_041199" description="In isoform 6." evidence="14">
    <location>
        <begin position="1654"/>
        <end position="1824"/>
    </location>
</feature>
<feature type="splice variant" id="VSP_038710" description="In isoform 3." evidence="15">
    <location>
        <begin position="1683"/>
        <end position="1746"/>
    </location>
</feature>
<feature type="splice variant" id="VSP_038711" description="In isoform 2." evidence="15">
    <original>PNSYPGSTGAAVGAHDACRDAKEKRSKSQDADSPGSSGAPENLTFKERQRLFSQGQDVSNKVKASRKLTELENELNTK</original>
    <variation>QDKYSSTRKSHGDLLPAPLKPRPPPCQPRPASDGVFLSNSFQPPSAKANSTAHKKGQPLPPPKKSSSYHPSHCKGRGKRVTNQLSLS</variation>
    <location>
        <begin position="1747"/>
        <end position="1824"/>
    </location>
</feature>
<feature type="sequence conflict" description="In Ref. 1; AAC50059." evidence="15" ref="1">
    <original>G</original>
    <variation>V</variation>
    <location>
        <position position="374"/>
    </location>
</feature>
<feature type="sequence conflict" description="In Ref. 1; AAC50059." evidence="15" ref="1">
    <original>R</original>
    <variation>P</variation>
    <location>
        <position position="1425"/>
    </location>
</feature>
<feature type="strand" evidence="27">
    <location>
        <begin position="1007"/>
        <end position="1013"/>
    </location>
</feature>
<feature type="strand" evidence="24">
    <location>
        <begin position="1015"/>
        <end position="1017"/>
    </location>
</feature>
<feature type="strand" evidence="27">
    <location>
        <begin position="1020"/>
        <end position="1025"/>
    </location>
</feature>
<feature type="strand" evidence="25">
    <location>
        <begin position="1028"/>
        <end position="1031"/>
    </location>
</feature>
<feature type="strand" evidence="27">
    <location>
        <begin position="1034"/>
        <end position="1040"/>
    </location>
</feature>
<feature type="strand" evidence="25">
    <location>
        <begin position="1042"/>
        <end position="1044"/>
    </location>
</feature>
<feature type="helix" evidence="27">
    <location>
        <begin position="1045"/>
        <end position="1049"/>
    </location>
</feature>
<feature type="strand" evidence="27">
    <location>
        <begin position="1057"/>
        <end position="1061"/>
    </location>
</feature>
<feature type="helix" evidence="27">
    <location>
        <begin position="1071"/>
        <end position="1079"/>
    </location>
</feature>
<feature type="strand" evidence="27">
    <location>
        <begin position="1083"/>
        <end position="1090"/>
    </location>
</feature>
<feature type="turn" evidence="26">
    <location>
        <begin position="1722"/>
        <end position="1724"/>
    </location>
</feature>
<feature type="turn" evidence="26">
    <location>
        <begin position="1735"/>
        <end position="1738"/>
    </location>
</feature>
<feature type="sequence conflict" description="In Ref. 1; AAC50059 and 2; BAA32485." evidence="15" ref="1 2">
    <original>DV</original>
    <variation>D</variation>
    <location sequence="P55196-2">
        <begin position="1031"/>
        <end position="1032"/>
    </location>
</feature>